<evidence type="ECO:0000255" key="1">
    <source>
        <dbReference type="HAMAP-Rule" id="MF_01694"/>
    </source>
</evidence>
<evidence type="ECO:0000255" key="2">
    <source>
        <dbReference type="PROSITE-ProRule" id="PRU01266"/>
    </source>
</evidence>
<evidence type="ECO:0000305" key="3"/>
<keyword id="KW-0001">2Fe-2S</keyword>
<keyword id="KW-0004">4Fe-4S</keyword>
<keyword id="KW-0093">Biotin biosynthesis</keyword>
<keyword id="KW-0408">Iron</keyword>
<keyword id="KW-0411">Iron-sulfur</keyword>
<keyword id="KW-0479">Metal-binding</keyword>
<keyword id="KW-1185">Reference proteome</keyword>
<keyword id="KW-0949">S-adenosyl-L-methionine</keyword>
<keyword id="KW-0808">Transferase</keyword>
<gene>
    <name evidence="1" type="primary">bioB</name>
    <name type="ordered locus">CJA_0426</name>
</gene>
<reference key="1">
    <citation type="journal article" date="2008" name="J. Bacteriol.">
        <title>Insights into plant cell wall degradation from the genome sequence of the soil bacterium Cellvibrio japonicus.</title>
        <authorList>
            <person name="DeBoy R.T."/>
            <person name="Mongodin E.F."/>
            <person name="Fouts D.E."/>
            <person name="Tailford L.E."/>
            <person name="Khouri H."/>
            <person name="Emerson J.B."/>
            <person name="Mohamoud Y."/>
            <person name="Watkins K."/>
            <person name="Henrissat B."/>
            <person name="Gilbert H.J."/>
            <person name="Nelson K.E."/>
        </authorList>
    </citation>
    <scope>NUCLEOTIDE SEQUENCE [LARGE SCALE GENOMIC DNA]</scope>
    <source>
        <strain>Ueda107</strain>
    </source>
</reference>
<proteinExistence type="inferred from homology"/>
<dbReference type="EC" id="2.8.1.6" evidence="1"/>
<dbReference type="EMBL" id="CP000934">
    <property type="protein sequence ID" value="ACE84739.1"/>
    <property type="status" value="ALT_INIT"/>
    <property type="molecule type" value="Genomic_DNA"/>
</dbReference>
<dbReference type="RefSeq" id="WP_049765384.1">
    <property type="nucleotide sequence ID" value="NC_010995.1"/>
</dbReference>
<dbReference type="SMR" id="B3PI87"/>
<dbReference type="STRING" id="498211.CJA_0426"/>
<dbReference type="KEGG" id="cja:CJA_0426"/>
<dbReference type="eggNOG" id="COG0502">
    <property type="taxonomic scope" value="Bacteria"/>
</dbReference>
<dbReference type="HOGENOM" id="CLU_033172_1_2_6"/>
<dbReference type="OrthoDB" id="9786826at2"/>
<dbReference type="UniPathway" id="UPA00078">
    <property type="reaction ID" value="UER00162"/>
</dbReference>
<dbReference type="Proteomes" id="UP000001036">
    <property type="component" value="Chromosome"/>
</dbReference>
<dbReference type="GO" id="GO:0051537">
    <property type="term" value="F:2 iron, 2 sulfur cluster binding"/>
    <property type="evidence" value="ECO:0007669"/>
    <property type="project" value="UniProtKB-KW"/>
</dbReference>
<dbReference type="GO" id="GO:0051539">
    <property type="term" value="F:4 iron, 4 sulfur cluster binding"/>
    <property type="evidence" value="ECO:0007669"/>
    <property type="project" value="UniProtKB-KW"/>
</dbReference>
<dbReference type="GO" id="GO:0004076">
    <property type="term" value="F:biotin synthase activity"/>
    <property type="evidence" value="ECO:0007669"/>
    <property type="project" value="UniProtKB-UniRule"/>
</dbReference>
<dbReference type="GO" id="GO:0005506">
    <property type="term" value="F:iron ion binding"/>
    <property type="evidence" value="ECO:0007669"/>
    <property type="project" value="UniProtKB-UniRule"/>
</dbReference>
<dbReference type="GO" id="GO:0009102">
    <property type="term" value="P:biotin biosynthetic process"/>
    <property type="evidence" value="ECO:0007669"/>
    <property type="project" value="UniProtKB-UniRule"/>
</dbReference>
<dbReference type="CDD" id="cd01335">
    <property type="entry name" value="Radical_SAM"/>
    <property type="match status" value="1"/>
</dbReference>
<dbReference type="FunFam" id="3.20.20.70:FF:000011">
    <property type="entry name" value="Biotin synthase"/>
    <property type="match status" value="1"/>
</dbReference>
<dbReference type="Gene3D" id="3.20.20.70">
    <property type="entry name" value="Aldolase class I"/>
    <property type="match status" value="1"/>
</dbReference>
<dbReference type="HAMAP" id="MF_01694">
    <property type="entry name" value="BioB"/>
    <property type="match status" value="1"/>
</dbReference>
<dbReference type="InterPro" id="IPR013785">
    <property type="entry name" value="Aldolase_TIM"/>
</dbReference>
<dbReference type="InterPro" id="IPR010722">
    <property type="entry name" value="BATS_dom"/>
</dbReference>
<dbReference type="InterPro" id="IPR002684">
    <property type="entry name" value="Biotin_synth/BioAB"/>
</dbReference>
<dbReference type="InterPro" id="IPR024177">
    <property type="entry name" value="Biotin_synthase"/>
</dbReference>
<dbReference type="InterPro" id="IPR006638">
    <property type="entry name" value="Elp3/MiaA/NifB-like_rSAM"/>
</dbReference>
<dbReference type="InterPro" id="IPR007197">
    <property type="entry name" value="rSAM"/>
</dbReference>
<dbReference type="NCBIfam" id="TIGR00433">
    <property type="entry name" value="bioB"/>
    <property type="match status" value="1"/>
</dbReference>
<dbReference type="PANTHER" id="PTHR22976">
    <property type="entry name" value="BIOTIN SYNTHASE"/>
    <property type="match status" value="1"/>
</dbReference>
<dbReference type="PANTHER" id="PTHR22976:SF2">
    <property type="entry name" value="BIOTIN SYNTHASE, MITOCHONDRIAL"/>
    <property type="match status" value="1"/>
</dbReference>
<dbReference type="Pfam" id="PF06968">
    <property type="entry name" value="BATS"/>
    <property type="match status" value="1"/>
</dbReference>
<dbReference type="Pfam" id="PF04055">
    <property type="entry name" value="Radical_SAM"/>
    <property type="match status" value="1"/>
</dbReference>
<dbReference type="PIRSF" id="PIRSF001619">
    <property type="entry name" value="Biotin_synth"/>
    <property type="match status" value="1"/>
</dbReference>
<dbReference type="SFLD" id="SFLDG01060">
    <property type="entry name" value="BATS_domain_containing"/>
    <property type="match status" value="1"/>
</dbReference>
<dbReference type="SFLD" id="SFLDF00272">
    <property type="entry name" value="biotin_synthase"/>
    <property type="match status" value="1"/>
</dbReference>
<dbReference type="SMART" id="SM00876">
    <property type="entry name" value="BATS"/>
    <property type="match status" value="1"/>
</dbReference>
<dbReference type="SMART" id="SM00729">
    <property type="entry name" value="Elp3"/>
    <property type="match status" value="1"/>
</dbReference>
<dbReference type="SUPFAM" id="SSF102114">
    <property type="entry name" value="Radical SAM enzymes"/>
    <property type="match status" value="1"/>
</dbReference>
<dbReference type="PROSITE" id="PS51918">
    <property type="entry name" value="RADICAL_SAM"/>
    <property type="match status" value="1"/>
</dbReference>
<sequence length="358" mass="39567">MNASFAPSSSFVAGLRHDWSRAEIKALFELPFSDLMFQAQSVHRAWFNPNEVQVSTLCSIKTGACPEDCAYCPQSARYDTGLEKEKLMAVEKVIEEARAAKASGATRFCMGAAWRSPKGKDMPYVTAMVKGVKSLGMETCMTLGMLSEAQAQDLADAGLDYYNHNLDTSPEYYGEIITTRTYQDRLETLDNVRKAGMKVCCGGIVGMGEEVLDRAGLLQQLANMAEHPESVPINMLVKVGGTPLEREADLDPIDFIRTIAVARILMPKSHVRLSAGREQMNEQTQALAFLAGANSIFYGEKLLTTPNPEANKDMQLFNKLGIKPEAYDVHETEEEQEAALVHQLEEAKLDAFFYNAAR</sequence>
<comment type="function">
    <text evidence="1">Catalyzes the conversion of dethiobiotin (DTB) to biotin by the insertion of a sulfur atom into dethiobiotin via a radical-based mechanism.</text>
</comment>
<comment type="catalytic activity">
    <reaction evidence="1">
        <text>(4R,5S)-dethiobiotin + (sulfur carrier)-SH + 2 reduced [2Fe-2S]-[ferredoxin] + 2 S-adenosyl-L-methionine = (sulfur carrier)-H + biotin + 2 5'-deoxyadenosine + 2 L-methionine + 2 oxidized [2Fe-2S]-[ferredoxin]</text>
        <dbReference type="Rhea" id="RHEA:22060"/>
        <dbReference type="Rhea" id="RHEA-COMP:10000"/>
        <dbReference type="Rhea" id="RHEA-COMP:10001"/>
        <dbReference type="Rhea" id="RHEA-COMP:14737"/>
        <dbReference type="Rhea" id="RHEA-COMP:14739"/>
        <dbReference type="ChEBI" id="CHEBI:17319"/>
        <dbReference type="ChEBI" id="CHEBI:29917"/>
        <dbReference type="ChEBI" id="CHEBI:33737"/>
        <dbReference type="ChEBI" id="CHEBI:33738"/>
        <dbReference type="ChEBI" id="CHEBI:57586"/>
        <dbReference type="ChEBI" id="CHEBI:57844"/>
        <dbReference type="ChEBI" id="CHEBI:59789"/>
        <dbReference type="ChEBI" id="CHEBI:64428"/>
        <dbReference type="ChEBI" id="CHEBI:149473"/>
        <dbReference type="EC" id="2.8.1.6"/>
    </reaction>
</comment>
<comment type="cofactor">
    <cofactor evidence="1">
        <name>[4Fe-4S] cluster</name>
        <dbReference type="ChEBI" id="CHEBI:49883"/>
    </cofactor>
    <text evidence="1">Binds 1 [4Fe-4S] cluster. The cluster is coordinated with 3 cysteines and an exchangeable S-adenosyl-L-methionine.</text>
</comment>
<comment type="cofactor">
    <cofactor evidence="1">
        <name>[2Fe-2S] cluster</name>
        <dbReference type="ChEBI" id="CHEBI:190135"/>
    </cofactor>
    <text evidence="1">Binds 1 [2Fe-2S] cluster. The cluster is coordinated with 3 cysteines and 1 arginine.</text>
</comment>
<comment type="pathway">
    <text evidence="1">Cofactor biosynthesis; biotin biosynthesis; biotin from 7,8-diaminononanoate: step 2/2.</text>
</comment>
<comment type="subunit">
    <text evidence="1">Homodimer.</text>
</comment>
<comment type="similarity">
    <text evidence="1">Belongs to the radical SAM superfamily. Biotin synthase family.</text>
</comment>
<comment type="sequence caution" evidence="3">
    <conflict type="erroneous initiation">
        <sequence resource="EMBL-CDS" id="ACE84739"/>
    </conflict>
</comment>
<accession>B3PI87</accession>
<protein>
    <recommendedName>
        <fullName evidence="1">Biotin synthase</fullName>
        <ecNumber evidence="1">2.8.1.6</ecNumber>
    </recommendedName>
</protein>
<feature type="chain" id="PRO_0000381294" description="Biotin synthase">
    <location>
        <begin position="1"/>
        <end position="358"/>
    </location>
</feature>
<feature type="domain" description="Radical SAM core" evidence="2">
    <location>
        <begin position="50"/>
        <end position="277"/>
    </location>
</feature>
<feature type="binding site" evidence="1">
    <location>
        <position position="65"/>
    </location>
    <ligand>
        <name>[4Fe-4S] cluster</name>
        <dbReference type="ChEBI" id="CHEBI:49883"/>
        <note>4Fe-4S-S-AdoMet</note>
    </ligand>
</feature>
<feature type="binding site" evidence="1">
    <location>
        <position position="69"/>
    </location>
    <ligand>
        <name>[4Fe-4S] cluster</name>
        <dbReference type="ChEBI" id="CHEBI:49883"/>
        <note>4Fe-4S-S-AdoMet</note>
    </ligand>
</feature>
<feature type="binding site" evidence="1">
    <location>
        <position position="72"/>
    </location>
    <ligand>
        <name>[4Fe-4S] cluster</name>
        <dbReference type="ChEBI" id="CHEBI:49883"/>
        <note>4Fe-4S-S-AdoMet</note>
    </ligand>
</feature>
<feature type="binding site" evidence="1">
    <location>
        <position position="109"/>
    </location>
    <ligand>
        <name>[2Fe-2S] cluster</name>
        <dbReference type="ChEBI" id="CHEBI:190135"/>
    </ligand>
</feature>
<feature type="binding site" evidence="1">
    <location>
        <position position="140"/>
    </location>
    <ligand>
        <name>[2Fe-2S] cluster</name>
        <dbReference type="ChEBI" id="CHEBI:190135"/>
    </ligand>
</feature>
<feature type="binding site" evidence="1">
    <location>
        <position position="200"/>
    </location>
    <ligand>
        <name>[2Fe-2S] cluster</name>
        <dbReference type="ChEBI" id="CHEBI:190135"/>
    </ligand>
</feature>
<feature type="binding site" evidence="1">
    <location>
        <position position="272"/>
    </location>
    <ligand>
        <name>[2Fe-2S] cluster</name>
        <dbReference type="ChEBI" id="CHEBI:190135"/>
    </ligand>
</feature>
<organism>
    <name type="scientific">Cellvibrio japonicus (strain Ueda107)</name>
    <name type="common">Pseudomonas fluorescens subsp. cellulosa</name>
    <dbReference type="NCBI Taxonomy" id="498211"/>
    <lineage>
        <taxon>Bacteria</taxon>
        <taxon>Pseudomonadati</taxon>
        <taxon>Pseudomonadota</taxon>
        <taxon>Gammaproteobacteria</taxon>
        <taxon>Cellvibrionales</taxon>
        <taxon>Cellvibrionaceae</taxon>
        <taxon>Cellvibrio</taxon>
    </lineage>
</organism>
<name>BIOB_CELJU</name>